<dbReference type="EC" id="1.18.1.2" evidence="1"/>
<dbReference type="EMBL" id="CP000387">
    <property type="protein sequence ID" value="ABN44244.1"/>
    <property type="molecule type" value="Genomic_DNA"/>
</dbReference>
<dbReference type="RefSeq" id="WP_011836730.1">
    <property type="nucleotide sequence ID" value="NC_009009.1"/>
</dbReference>
<dbReference type="RefSeq" id="YP_001034794.1">
    <property type="nucleotide sequence ID" value="NC_009009.1"/>
</dbReference>
<dbReference type="SMR" id="A3CM39"/>
<dbReference type="STRING" id="388919.SSA_0813"/>
<dbReference type="KEGG" id="ssa:SSA_0813"/>
<dbReference type="PATRIC" id="fig|388919.9.peg.779"/>
<dbReference type="eggNOG" id="COG0492">
    <property type="taxonomic scope" value="Bacteria"/>
</dbReference>
<dbReference type="HOGENOM" id="CLU_031864_5_5_9"/>
<dbReference type="OrthoDB" id="9806179at2"/>
<dbReference type="Proteomes" id="UP000002148">
    <property type="component" value="Chromosome"/>
</dbReference>
<dbReference type="GO" id="GO:0004324">
    <property type="term" value="F:ferredoxin-NADP+ reductase activity"/>
    <property type="evidence" value="ECO:0007669"/>
    <property type="project" value="UniProtKB-UniRule"/>
</dbReference>
<dbReference type="GO" id="GO:0050660">
    <property type="term" value="F:flavin adenine dinucleotide binding"/>
    <property type="evidence" value="ECO:0007669"/>
    <property type="project" value="UniProtKB-UniRule"/>
</dbReference>
<dbReference type="GO" id="GO:0050661">
    <property type="term" value="F:NADP binding"/>
    <property type="evidence" value="ECO:0007669"/>
    <property type="project" value="UniProtKB-UniRule"/>
</dbReference>
<dbReference type="Gene3D" id="3.50.50.60">
    <property type="entry name" value="FAD/NAD(P)-binding domain"/>
    <property type="match status" value="2"/>
</dbReference>
<dbReference type="HAMAP" id="MF_01685">
    <property type="entry name" value="FENR2"/>
    <property type="match status" value="1"/>
</dbReference>
<dbReference type="InterPro" id="IPR036188">
    <property type="entry name" value="FAD/NAD-bd_sf"/>
</dbReference>
<dbReference type="InterPro" id="IPR023753">
    <property type="entry name" value="FAD/NAD-binding_dom"/>
</dbReference>
<dbReference type="InterPro" id="IPR022890">
    <property type="entry name" value="Fd--NADP_Rdtase_type_2"/>
</dbReference>
<dbReference type="InterPro" id="IPR050097">
    <property type="entry name" value="Ferredoxin-NADP_redctase_2"/>
</dbReference>
<dbReference type="PANTHER" id="PTHR48105">
    <property type="entry name" value="THIOREDOXIN REDUCTASE 1-RELATED-RELATED"/>
    <property type="match status" value="1"/>
</dbReference>
<dbReference type="Pfam" id="PF07992">
    <property type="entry name" value="Pyr_redox_2"/>
    <property type="match status" value="1"/>
</dbReference>
<dbReference type="PRINTS" id="PR00368">
    <property type="entry name" value="FADPNR"/>
</dbReference>
<dbReference type="PRINTS" id="PR00469">
    <property type="entry name" value="PNDRDTASEII"/>
</dbReference>
<dbReference type="SUPFAM" id="SSF51905">
    <property type="entry name" value="FAD/NAD(P)-binding domain"/>
    <property type="match status" value="1"/>
</dbReference>
<reference key="1">
    <citation type="journal article" date="2007" name="J. Bacteriol.">
        <title>Genome of the opportunistic pathogen Streptococcus sanguinis.</title>
        <authorList>
            <person name="Xu P."/>
            <person name="Alves J.M."/>
            <person name="Kitten T."/>
            <person name="Brown A."/>
            <person name="Chen Z."/>
            <person name="Ozaki L.S."/>
            <person name="Manque P."/>
            <person name="Ge X."/>
            <person name="Serrano M.G."/>
            <person name="Puiu D."/>
            <person name="Hendricks S."/>
            <person name="Wang Y."/>
            <person name="Chaplin M.D."/>
            <person name="Akan D."/>
            <person name="Paik S."/>
            <person name="Peterson D.L."/>
            <person name="Macrina F.L."/>
            <person name="Buck G.A."/>
        </authorList>
    </citation>
    <scope>NUCLEOTIDE SEQUENCE [LARGE SCALE GENOMIC DNA]</scope>
    <source>
        <strain>SK36</strain>
    </source>
</reference>
<feature type="chain" id="PRO_0000364973" description="Ferredoxin--NADP reductase">
    <location>
        <begin position="1"/>
        <end position="322"/>
    </location>
</feature>
<feature type="binding site" evidence="1">
    <location>
        <position position="34"/>
    </location>
    <ligand>
        <name>FAD</name>
        <dbReference type="ChEBI" id="CHEBI:57692"/>
    </ligand>
</feature>
<feature type="binding site" evidence="1">
    <location>
        <position position="42"/>
    </location>
    <ligand>
        <name>FAD</name>
        <dbReference type="ChEBI" id="CHEBI:57692"/>
    </ligand>
</feature>
<feature type="binding site" evidence="1">
    <location>
        <position position="47"/>
    </location>
    <ligand>
        <name>FAD</name>
        <dbReference type="ChEBI" id="CHEBI:57692"/>
    </ligand>
</feature>
<feature type="binding site" evidence="1">
    <location>
        <position position="87"/>
    </location>
    <ligand>
        <name>FAD</name>
        <dbReference type="ChEBI" id="CHEBI:57692"/>
    </ligand>
</feature>
<feature type="binding site" evidence="1">
    <location>
        <position position="120"/>
    </location>
    <ligand>
        <name>FAD</name>
        <dbReference type="ChEBI" id="CHEBI:57692"/>
    </ligand>
</feature>
<feature type="binding site" evidence="1">
    <location>
        <position position="279"/>
    </location>
    <ligand>
        <name>FAD</name>
        <dbReference type="ChEBI" id="CHEBI:57692"/>
    </ligand>
</feature>
<feature type="binding site" evidence="1">
    <location>
        <position position="320"/>
    </location>
    <ligand>
        <name>FAD</name>
        <dbReference type="ChEBI" id="CHEBI:57692"/>
    </ligand>
</feature>
<sequence length="322" mass="35155">MSELYDITIVGGGPVGLFAAFYAHLRQAKVKIIDSLPQLGGQPAILYPEKKILDVPGFTNLSGEELTQRLIEQLETFQTEICLNETVLDIVKSDDGFTITTSQAQHQTKTIIIAMGGGAFKPRALELDAAESYSNLHYHVSNISQYAGKKVVVLGGGDSAVDWALAFEKIAETSLVHRRDNFRALEHSVEELKASSVEIKTPFVPSRLVGENGKITHLEISQVKGEESQLLPLDHLFVNYGFKSSVGNLKDWGLELNRHKILVNSKQETSVPGIYAAGDCCSYEGKIDLIATGLGEAPTAVNNAINHIYPDQKVQPKHSTSL</sequence>
<gene>
    <name type="ordered locus">SSA_0813</name>
</gene>
<keyword id="KW-0274">FAD</keyword>
<keyword id="KW-0285">Flavoprotein</keyword>
<keyword id="KW-0521">NADP</keyword>
<keyword id="KW-0560">Oxidoreductase</keyword>
<keyword id="KW-1185">Reference proteome</keyword>
<name>FENR_STRSV</name>
<comment type="catalytic activity">
    <reaction evidence="1">
        <text>2 reduced [2Fe-2S]-[ferredoxin] + NADP(+) + H(+) = 2 oxidized [2Fe-2S]-[ferredoxin] + NADPH</text>
        <dbReference type="Rhea" id="RHEA:20125"/>
        <dbReference type="Rhea" id="RHEA-COMP:10000"/>
        <dbReference type="Rhea" id="RHEA-COMP:10001"/>
        <dbReference type="ChEBI" id="CHEBI:15378"/>
        <dbReference type="ChEBI" id="CHEBI:33737"/>
        <dbReference type="ChEBI" id="CHEBI:33738"/>
        <dbReference type="ChEBI" id="CHEBI:57783"/>
        <dbReference type="ChEBI" id="CHEBI:58349"/>
        <dbReference type="EC" id="1.18.1.2"/>
    </reaction>
</comment>
<comment type="cofactor">
    <cofactor evidence="1">
        <name>FAD</name>
        <dbReference type="ChEBI" id="CHEBI:57692"/>
    </cofactor>
    <text evidence="1">Binds 1 FAD per subunit.</text>
</comment>
<comment type="subunit">
    <text evidence="1">Homodimer.</text>
</comment>
<comment type="similarity">
    <text evidence="1">Belongs to the ferredoxin--NADP reductase type 2 family.</text>
</comment>
<evidence type="ECO:0000255" key="1">
    <source>
        <dbReference type="HAMAP-Rule" id="MF_01685"/>
    </source>
</evidence>
<organism>
    <name type="scientific">Streptococcus sanguinis (strain SK36)</name>
    <dbReference type="NCBI Taxonomy" id="388919"/>
    <lineage>
        <taxon>Bacteria</taxon>
        <taxon>Bacillati</taxon>
        <taxon>Bacillota</taxon>
        <taxon>Bacilli</taxon>
        <taxon>Lactobacillales</taxon>
        <taxon>Streptococcaceae</taxon>
        <taxon>Streptococcus</taxon>
    </lineage>
</organism>
<proteinExistence type="inferred from homology"/>
<accession>A3CM39</accession>
<protein>
    <recommendedName>
        <fullName evidence="1">Ferredoxin--NADP reductase</fullName>
        <shortName evidence="1">FNR</shortName>
        <shortName evidence="1">Fd-NADP(+) reductase</shortName>
        <ecNumber evidence="1">1.18.1.2</ecNumber>
    </recommendedName>
</protein>